<comment type="function">
    <text evidence="1">Component of LSm protein complexes, which are involved in RNA processing and may function in a chaperone-like manner, facilitating the efficient association of RNA processing factors with their substrates. Component of the cytoplasmic LSM1-LSM7 complex, which is thought to be involved in mRNA degradation by activating the decapping step in the 5'-to-3' mRNA decay pathway. Component of the nuclear LSM2-LSM8 complex, which is involved in splicing of nuclear mRNAs. LSM2-LSM8 associates with multiple snRNP complexes containing the U6 snRNA (U4/U6 di-snRNP, spliceosomal U4/U6.U5 tri-snRNP, and free U6 snRNP). It binds directly to the 3'-terminal U-tract of U6 snRNA and plays a role in the biogenesis and stability of the U6 snRNP and U4/U6 snRNP complexes. LSM2-LSM8 probably also is involved degradation of nuclear pre-mRNA by targeting them for decapping, and in processing of pre-tRNAs, pre-rRNAs and U3 snoRNA (By similarity).</text>
</comment>
<comment type="subunit">
    <text evidence="1">Component of the heptameric LSM1-LSM7 complex, which consists of LSM1, LSM2, LSM3, LSM4, LSM5, LSM6 and LSM7. Component of the heptameric LSM2-LSM8 complex, which consists of LSM2, LSM3, LSM4, LSM5, LSM6, LSM7 and LSM8. The LSm subunits form a seven-membered ring structure with a doughnut shape (By similarity).</text>
</comment>
<comment type="subcellular location">
    <subcellularLocation>
        <location evidence="1">Cytoplasm</location>
    </subcellularLocation>
    <subcellularLocation>
        <location evidence="1">Nucleus</location>
    </subcellularLocation>
</comment>
<comment type="similarity">
    <text evidence="3">Belongs to the snRNP Sm proteins family. SmF/LSm6 subfamily.</text>
</comment>
<reference key="1">
    <citation type="journal article" date="2007" name="Proc. Natl. Acad. Sci. U.S.A.">
        <title>Independent sorting-out of thousands of duplicated gene pairs in two yeast species descended from a whole-genome duplication.</title>
        <authorList>
            <person name="Scannell D.R."/>
            <person name="Frank A.C."/>
            <person name="Conant G.C."/>
            <person name="Byrne K.P."/>
            <person name="Woolfit M."/>
            <person name="Wolfe K.H."/>
        </authorList>
    </citation>
    <scope>NUCLEOTIDE SEQUENCE [LARGE SCALE GENOMIC DNA]</scope>
    <source>
        <strain>ATCC 22028 / DSM 70294 / BCRC 21397 / CBS 2163 / NBRC 10782 / NRRL Y-8283 / UCD 57-17</strain>
    </source>
</reference>
<name>LSM6_VANPO</name>
<keyword id="KW-0963">Cytoplasm</keyword>
<keyword id="KW-0507">mRNA processing</keyword>
<keyword id="KW-0508">mRNA splicing</keyword>
<keyword id="KW-0539">Nucleus</keyword>
<keyword id="KW-1185">Reference proteome</keyword>
<keyword id="KW-0687">Ribonucleoprotein</keyword>
<keyword id="KW-0694">RNA-binding</keyword>
<keyword id="KW-0698">rRNA processing</keyword>
<keyword id="KW-0747">Spliceosome</keyword>
<keyword id="KW-0819">tRNA processing</keyword>
<accession>A7TK72</accession>
<feature type="chain" id="PRO_0000333606" description="U6 snRNA-associated Sm-like protein LSm6">
    <location>
        <begin position="1"/>
        <end position="83"/>
    </location>
</feature>
<feature type="domain" description="Sm" evidence="2">
    <location>
        <begin position="11"/>
        <end position="83"/>
    </location>
</feature>
<sequence>MSAAQSGTTSVSTQFLANIIGKPVSVKLYSGMMYKGKLESIDGFMNVALSNTSEHFESNAHMLKRYENDVFLRGTQVMYISEA</sequence>
<dbReference type="EMBL" id="DS480406">
    <property type="protein sequence ID" value="EDO17307.1"/>
    <property type="molecule type" value="Genomic_DNA"/>
</dbReference>
<dbReference type="RefSeq" id="XP_001645165.1">
    <property type="nucleotide sequence ID" value="XM_001645115.1"/>
</dbReference>
<dbReference type="SMR" id="A7TK72"/>
<dbReference type="FunCoup" id="A7TK72">
    <property type="interactions" value="894"/>
</dbReference>
<dbReference type="STRING" id="436907.A7TK72"/>
<dbReference type="GeneID" id="5545515"/>
<dbReference type="KEGG" id="vpo:Kpol_1062p15"/>
<dbReference type="eggNOG" id="KOG1783">
    <property type="taxonomic scope" value="Eukaryota"/>
</dbReference>
<dbReference type="HOGENOM" id="CLU_076902_7_1_1"/>
<dbReference type="InParanoid" id="A7TK72"/>
<dbReference type="OMA" id="MYISEQK"/>
<dbReference type="OrthoDB" id="268799at2759"/>
<dbReference type="PhylomeDB" id="A7TK72"/>
<dbReference type="Proteomes" id="UP000000267">
    <property type="component" value="Unassembled WGS sequence"/>
</dbReference>
<dbReference type="GO" id="GO:1990726">
    <property type="term" value="C:Lsm1-7-Pat1 complex"/>
    <property type="evidence" value="ECO:0007669"/>
    <property type="project" value="EnsemblFungi"/>
</dbReference>
<dbReference type="GO" id="GO:0005730">
    <property type="term" value="C:nucleolus"/>
    <property type="evidence" value="ECO:0007669"/>
    <property type="project" value="EnsemblFungi"/>
</dbReference>
<dbReference type="GO" id="GO:0000932">
    <property type="term" value="C:P-body"/>
    <property type="evidence" value="ECO:0007669"/>
    <property type="project" value="EnsemblFungi"/>
</dbReference>
<dbReference type="GO" id="GO:0005732">
    <property type="term" value="C:sno(s)RNA-containing ribonucleoprotein complex"/>
    <property type="evidence" value="ECO:0007669"/>
    <property type="project" value="EnsemblFungi"/>
</dbReference>
<dbReference type="GO" id="GO:0005681">
    <property type="term" value="C:spliceosomal complex"/>
    <property type="evidence" value="ECO:0007669"/>
    <property type="project" value="UniProtKB-KW"/>
</dbReference>
<dbReference type="GO" id="GO:0046540">
    <property type="term" value="C:U4/U6 x U5 tri-snRNP complex"/>
    <property type="evidence" value="ECO:0007669"/>
    <property type="project" value="EnsemblFungi"/>
</dbReference>
<dbReference type="GO" id="GO:0005688">
    <property type="term" value="C:U6 snRNP"/>
    <property type="evidence" value="ECO:0007669"/>
    <property type="project" value="EnsemblFungi"/>
</dbReference>
<dbReference type="GO" id="GO:0003723">
    <property type="term" value="F:RNA binding"/>
    <property type="evidence" value="ECO:0007669"/>
    <property type="project" value="UniProtKB-KW"/>
</dbReference>
<dbReference type="GO" id="GO:0000290">
    <property type="term" value="P:deadenylation-dependent decapping of nuclear-transcribed mRNA"/>
    <property type="evidence" value="ECO:0007669"/>
    <property type="project" value="EnsemblFungi"/>
</dbReference>
<dbReference type="GO" id="GO:0030490">
    <property type="term" value="P:maturation of SSU-rRNA"/>
    <property type="evidence" value="ECO:0007669"/>
    <property type="project" value="EnsemblFungi"/>
</dbReference>
<dbReference type="GO" id="GO:0000398">
    <property type="term" value="P:mRNA splicing, via spliceosome"/>
    <property type="evidence" value="ECO:0007669"/>
    <property type="project" value="EnsemblFungi"/>
</dbReference>
<dbReference type="GO" id="GO:0008033">
    <property type="term" value="P:tRNA processing"/>
    <property type="evidence" value="ECO:0007669"/>
    <property type="project" value="UniProtKB-KW"/>
</dbReference>
<dbReference type="FunFam" id="2.30.30.100:FF:000037">
    <property type="entry name" value="U6 snRNA-associated Sm-like protein LSm6"/>
    <property type="match status" value="1"/>
</dbReference>
<dbReference type="Gene3D" id="2.30.30.100">
    <property type="match status" value="1"/>
</dbReference>
<dbReference type="InterPro" id="IPR016487">
    <property type="entry name" value="Lsm6/sSmF"/>
</dbReference>
<dbReference type="InterPro" id="IPR010920">
    <property type="entry name" value="LSM_dom_sf"/>
</dbReference>
<dbReference type="InterPro" id="IPR047575">
    <property type="entry name" value="Sm"/>
</dbReference>
<dbReference type="InterPro" id="IPR001163">
    <property type="entry name" value="Sm_dom_euk/arc"/>
</dbReference>
<dbReference type="PANTHER" id="PTHR11021">
    <property type="entry name" value="SMALL NUCLEAR RIBONUCLEOPROTEIN F SNRNP-F"/>
    <property type="match status" value="1"/>
</dbReference>
<dbReference type="PANTHER" id="PTHR11021:SF1">
    <property type="entry name" value="U6 SNRNA-ASSOCIATED SM-LIKE PROTEIN LSM6"/>
    <property type="match status" value="1"/>
</dbReference>
<dbReference type="Pfam" id="PF01423">
    <property type="entry name" value="LSM"/>
    <property type="match status" value="1"/>
</dbReference>
<dbReference type="SMART" id="SM00651">
    <property type="entry name" value="Sm"/>
    <property type="match status" value="1"/>
</dbReference>
<dbReference type="SUPFAM" id="SSF50182">
    <property type="entry name" value="Sm-like ribonucleoproteins"/>
    <property type="match status" value="1"/>
</dbReference>
<dbReference type="PROSITE" id="PS52002">
    <property type="entry name" value="SM"/>
    <property type="match status" value="1"/>
</dbReference>
<organism>
    <name type="scientific">Vanderwaltozyma polyspora (strain ATCC 22028 / DSM 70294 / BCRC 21397 / CBS 2163 / NBRC 10782 / NRRL Y-8283 / UCD 57-17)</name>
    <name type="common">Kluyveromyces polysporus</name>
    <dbReference type="NCBI Taxonomy" id="436907"/>
    <lineage>
        <taxon>Eukaryota</taxon>
        <taxon>Fungi</taxon>
        <taxon>Dikarya</taxon>
        <taxon>Ascomycota</taxon>
        <taxon>Saccharomycotina</taxon>
        <taxon>Saccharomycetes</taxon>
        <taxon>Saccharomycetales</taxon>
        <taxon>Saccharomycetaceae</taxon>
        <taxon>Vanderwaltozyma</taxon>
    </lineage>
</organism>
<protein>
    <recommendedName>
        <fullName>U6 snRNA-associated Sm-like protein LSm6</fullName>
    </recommendedName>
</protein>
<gene>
    <name type="primary">LSM6</name>
    <name type="ORF">Kpol_1062p15</name>
</gene>
<evidence type="ECO:0000250" key="1"/>
<evidence type="ECO:0000255" key="2">
    <source>
        <dbReference type="PROSITE-ProRule" id="PRU01346"/>
    </source>
</evidence>
<evidence type="ECO:0000305" key="3"/>
<proteinExistence type="inferred from homology"/>